<comment type="function">
    <text evidence="1">Heme chaperone required for the biogenesis of c-type cytochromes. Transiently binds heme delivered by CcmC and transfers the heme to apo-cytochromes in a process facilitated by CcmF and CcmH.</text>
</comment>
<comment type="subcellular location">
    <subcellularLocation>
        <location evidence="1">Cell inner membrane</location>
        <topology evidence="1">Single-pass type II membrane protein</topology>
        <orientation evidence="1">Periplasmic side</orientation>
    </subcellularLocation>
</comment>
<comment type="similarity">
    <text evidence="1">Belongs to the CcmE/CycJ family.</text>
</comment>
<accession>B1XWE8</accession>
<name>CCME_LEPCP</name>
<protein>
    <recommendedName>
        <fullName evidence="1">Cytochrome c-type biogenesis protein CcmE</fullName>
    </recommendedName>
    <alternativeName>
        <fullName evidence="1">Cytochrome c maturation protein E</fullName>
    </alternativeName>
    <alternativeName>
        <fullName evidence="1">Heme chaperone CcmE</fullName>
    </alternativeName>
</protein>
<dbReference type="EMBL" id="CP001013">
    <property type="protein sequence ID" value="ACB33816.1"/>
    <property type="molecule type" value="Genomic_DNA"/>
</dbReference>
<dbReference type="RefSeq" id="WP_012346578.1">
    <property type="nucleotide sequence ID" value="NC_010524.1"/>
</dbReference>
<dbReference type="SMR" id="B1XWE8"/>
<dbReference type="STRING" id="395495.Lcho_1548"/>
<dbReference type="KEGG" id="lch:Lcho_1548"/>
<dbReference type="eggNOG" id="COG2332">
    <property type="taxonomic scope" value="Bacteria"/>
</dbReference>
<dbReference type="HOGENOM" id="CLU_079503_1_1_4"/>
<dbReference type="OrthoDB" id="9793584at2"/>
<dbReference type="Proteomes" id="UP000001693">
    <property type="component" value="Chromosome"/>
</dbReference>
<dbReference type="GO" id="GO:0005886">
    <property type="term" value="C:plasma membrane"/>
    <property type="evidence" value="ECO:0007669"/>
    <property type="project" value="UniProtKB-SubCell"/>
</dbReference>
<dbReference type="GO" id="GO:0020037">
    <property type="term" value="F:heme binding"/>
    <property type="evidence" value="ECO:0007669"/>
    <property type="project" value="InterPro"/>
</dbReference>
<dbReference type="GO" id="GO:0046872">
    <property type="term" value="F:metal ion binding"/>
    <property type="evidence" value="ECO:0007669"/>
    <property type="project" value="UniProtKB-KW"/>
</dbReference>
<dbReference type="GO" id="GO:0017004">
    <property type="term" value="P:cytochrome complex assembly"/>
    <property type="evidence" value="ECO:0007669"/>
    <property type="project" value="UniProtKB-KW"/>
</dbReference>
<dbReference type="FunFam" id="2.40.50.140:FF:000104">
    <property type="entry name" value="Cytochrome c-type biogenesis protein CcmE"/>
    <property type="match status" value="1"/>
</dbReference>
<dbReference type="Gene3D" id="2.40.50.140">
    <property type="entry name" value="Nucleic acid-binding proteins"/>
    <property type="match status" value="1"/>
</dbReference>
<dbReference type="HAMAP" id="MF_01959">
    <property type="entry name" value="CcmE"/>
    <property type="match status" value="1"/>
</dbReference>
<dbReference type="InterPro" id="IPR004329">
    <property type="entry name" value="CcmE"/>
</dbReference>
<dbReference type="InterPro" id="IPR036127">
    <property type="entry name" value="CcmE-like_sf"/>
</dbReference>
<dbReference type="InterPro" id="IPR012340">
    <property type="entry name" value="NA-bd_OB-fold"/>
</dbReference>
<dbReference type="NCBIfam" id="NF009727">
    <property type="entry name" value="PRK13254.1-1"/>
    <property type="match status" value="1"/>
</dbReference>
<dbReference type="NCBIfam" id="NF009729">
    <property type="entry name" value="PRK13254.1-3"/>
    <property type="match status" value="1"/>
</dbReference>
<dbReference type="NCBIfam" id="NF009731">
    <property type="entry name" value="PRK13254.1-5"/>
    <property type="match status" value="1"/>
</dbReference>
<dbReference type="PANTHER" id="PTHR34128">
    <property type="entry name" value="CYTOCHROME C-TYPE BIOGENESIS PROTEIN CCME HOMOLOG, MITOCHONDRIAL"/>
    <property type="match status" value="1"/>
</dbReference>
<dbReference type="PANTHER" id="PTHR34128:SF2">
    <property type="entry name" value="CYTOCHROME C-TYPE BIOGENESIS PROTEIN CCME HOMOLOG, MITOCHONDRIAL"/>
    <property type="match status" value="1"/>
</dbReference>
<dbReference type="Pfam" id="PF03100">
    <property type="entry name" value="CcmE"/>
    <property type="match status" value="1"/>
</dbReference>
<dbReference type="SUPFAM" id="SSF82093">
    <property type="entry name" value="Heme chaperone CcmE"/>
    <property type="match status" value="1"/>
</dbReference>
<organism>
    <name type="scientific">Leptothrix cholodnii (strain ATCC 51168 / LMG 8142 / SP-6)</name>
    <name type="common">Leptothrix discophora (strain SP-6)</name>
    <dbReference type="NCBI Taxonomy" id="395495"/>
    <lineage>
        <taxon>Bacteria</taxon>
        <taxon>Pseudomonadati</taxon>
        <taxon>Pseudomonadota</taxon>
        <taxon>Betaproteobacteria</taxon>
        <taxon>Burkholderiales</taxon>
        <taxon>Sphaerotilaceae</taxon>
        <taxon>Leptothrix</taxon>
    </lineage>
</organism>
<gene>
    <name evidence="1" type="primary">ccmE</name>
    <name evidence="1" type="synonym">cycJ</name>
    <name type="ordered locus">Lcho_1548</name>
</gene>
<feature type="chain" id="PRO_1000189029" description="Cytochrome c-type biogenesis protein CcmE">
    <location>
        <begin position="1"/>
        <end position="153"/>
    </location>
</feature>
<feature type="topological domain" description="Cytoplasmic" evidence="1">
    <location>
        <begin position="1"/>
        <end position="7"/>
    </location>
</feature>
<feature type="transmembrane region" description="Helical; Signal-anchor for type II membrane protein" evidence="1">
    <location>
        <begin position="8"/>
        <end position="28"/>
    </location>
</feature>
<feature type="topological domain" description="Periplasmic" evidence="1">
    <location>
        <begin position="29"/>
        <end position="153"/>
    </location>
</feature>
<feature type="region of interest" description="Disordered" evidence="2">
    <location>
        <begin position="130"/>
        <end position="153"/>
    </location>
</feature>
<feature type="compositionally biased region" description="Polar residues" evidence="2">
    <location>
        <begin position="141"/>
        <end position="153"/>
    </location>
</feature>
<feature type="binding site" description="covalent" evidence="1">
    <location>
        <position position="120"/>
    </location>
    <ligand>
        <name>heme</name>
        <dbReference type="ChEBI" id="CHEBI:30413"/>
    </ligand>
</feature>
<feature type="binding site" description="axial binding residue" evidence="1">
    <location>
        <position position="124"/>
    </location>
    <ligand>
        <name>heme</name>
        <dbReference type="ChEBI" id="CHEBI:30413"/>
    </ligand>
    <ligandPart>
        <name>Fe</name>
        <dbReference type="ChEBI" id="CHEBI:18248"/>
    </ligandPart>
</feature>
<reference key="1">
    <citation type="submission" date="2008-03" db="EMBL/GenBank/DDBJ databases">
        <title>Complete sequence of Leptothrix cholodnii SP-6.</title>
        <authorList>
            <consortium name="US DOE Joint Genome Institute"/>
            <person name="Copeland A."/>
            <person name="Lucas S."/>
            <person name="Lapidus A."/>
            <person name="Glavina del Rio T."/>
            <person name="Dalin E."/>
            <person name="Tice H."/>
            <person name="Bruce D."/>
            <person name="Goodwin L."/>
            <person name="Pitluck S."/>
            <person name="Chertkov O."/>
            <person name="Brettin T."/>
            <person name="Detter J.C."/>
            <person name="Han C."/>
            <person name="Kuske C.R."/>
            <person name="Schmutz J."/>
            <person name="Larimer F."/>
            <person name="Land M."/>
            <person name="Hauser L."/>
            <person name="Kyrpides N."/>
            <person name="Lykidis A."/>
            <person name="Emerson D."/>
            <person name="Richardson P."/>
        </authorList>
    </citation>
    <scope>NUCLEOTIDE SEQUENCE [LARGE SCALE GENOMIC DNA]</scope>
    <source>
        <strain>ATCC 51168 / LMG 8142 / SP-6</strain>
    </source>
</reference>
<evidence type="ECO:0000255" key="1">
    <source>
        <dbReference type="HAMAP-Rule" id="MF_01959"/>
    </source>
</evidence>
<evidence type="ECO:0000256" key="2">
    <source>
        <dbReference type="SAM" id="MobiDB-lite"/>
    </source>
</evidence>
<keyword id="KW-0997">Cell inner membrane</keyword>
<keyword id="KW-1003">Cell membrane</keyword>
<keyword id="KW-0201">Cytochrome c-type biogenesis</keyword>
<keyword id="KW-0349">Heme</keyword>
<keyword id="KW-0408">Iron</keyword>
<keyword id="KW-0472">Membrane</keyword>
<keyword id="KW-0479">Metal-binding</keyword>
<keyword id="KW-1185">Reference proteome</keyword>
<keyword id="KW-0735">Signal-anchor</keyword>
<keyword id="KW-0812">Transmembrane</keyword>
<keyword id="KW-1133">Transmembrane helix</keyword>
<sequence>MKPRHKRLAIAGGVLVAVGAIATLVLNAFQSNLVFFYSPSQVVAKEVPDGRTFRLGGMVEDGSVKREGVMVSFVVTDTVQKVPVRFEGILPDLFKEGKGVVAQGKVEGGTFIAKEVLAKHDENYMPPEAAEALKRAKEGGQMQSSQAATGDPR</sequence>
<proteinExistence type="inferred from homology"/>